<evidence type="ECO:0000305" key="1"/>
<name>PHEB2_SYNPZ</name>
<keyword id="KW-0042">Antenna complex</keyword>
<keyword id="KW-0089">Bile pigment</keyword>
<keyword id="KW-0157">Chromophore</keyword>
<keyword id="KW-0903">Direct protein sequencing</keyword>
<keyword id="KW-0249">Electron transport</keyword>
<keyword id="KW-0472">Membrane</keyword>
<keyword id="KW-0602">Photosynthesis</keyword>
<keyword id="KW-0605">Phycobilisome</keyword>
<keyword id="KW-0793">Thylakoid</keyword>
<keyword id="KW-0813">Transport</keyword>
<protein>
    <recommendedName>
        <fullName>C-phycoerythrin class 2 subunit beta</fullName>
    </recommendedName>
    <alternativeName>
        <fullName>C-phycoerythrin class II beta chain</fullName>
    </alternativeName>
</protein>
<dbReference type="EMBL" id="M91809">
    <property type="protein sequence ID" value="AAA27321.1"/>
    <property type="molecule type" value="Genomic_DNA"/>
</dbReference>
<dbReference type="SMR" id="P0A319"/>
<dbReference type="KEGG" id="synw:SynWH8103_02303"/>
<dbReference type="OrthoDB" id="512145at2"/>
<dbReference type="GO" id="GO:0030089">
    <property type="term" value="C:phycobilisome"/>
    <property type="evidence" value="ECO:0007669"/>
    <property type="project" value="UniProtKB-KW"/>
</dbReference>
<dbReference type="GO" id="GO:0031676">
    <property type="term" value="C:plasma membrane-derived thylakoid membrane"/>
    <property type="evidence" value="ECO:0007669"/>
    <property type="project" value="UniProtKB-SubCell"/>
</dbReference>
<dbReference type="GO" id="GO:0015979">
    <property type="term" value="P:photosynthesis"/>
    <property type="evidence" value="ECO:0007669"/>
    <property type="project" value="UniProtKB-KW"/>
</dbReference>
<dbReference type="Gene3D" id="1.10.490.20">
    <property type="entry name" value="Phycocyanins"/>
    <property type="match status" value="1"/>
</dbReference>
<dbReference type="InterPro" id="IPR009050">
    <property type="entry name" value="Globin-like_sf"/>
</dbReference>
<dbReference type="InterPro" id="IPR012128">
    <property type="entry name" value="Phycobilisome_asu/bsu"/>
</dbReference>
<dbReference type="InterPro" id="IPR038719">
    <property type="entry name" value="Phycobilisome_asu/bsu_sf"/>
</dbReference>
<dbReference type="PANTHER" id="PTHR34011:SF7">
    <property type="entry name" value="C-PHYCOCYANIN BETA SUBUNIT"/>
    <property type="match status" value="1"/>
</dbReference>
<dbReference type="PANTHER" id="PTHR34011">
    <property type="entry name" value="PHYCOBILISOME 32.1 KDA LINKER POLYPEPTIDE, PHYCOCYANIN-ASSOCIATED, ROD 2-RELATED"/>
    <property type="match status" value="1"/>
</dbReference>
<dbReference type="Pfam" id="PF00502">
    <property type="entry name" value="Phycobilisome"/>
    <property type="match status" value="1"/>
</dbReference>
<dbReference type="PIRSF" id="PIRSF000081">
    <property type="entry name" value="Phycocyanin"/>
    <property type="match status" value="1"/>
</dbReference>
<dbReference type="SUPFAM" id="SSF46458">
    <property type="entry name" value="Globin-like"/>
    <property type="match status" value="1"/>
</dbReference>
<reference key="1">
    <citation type="journal article" date="1992" name="Plant Mol. Biol.">
        <title>Sequence comparison of two highly homologous phycoerythrins differing in bilin composition.</title>
        <authorList>
            <person name="de Lorimier R."/>
            <person name="Chen C.-C.J."/>
            <person name="Glazer A.N."/>
        </authorList>
    </citation>
    <scope>NUCLEOTIDE SEQUENCE [GENOMIC DNA]</scope>
</reference>
<reference key="2">
    <citation type="journal article" date="1991" name="J. Biol. Chem.">
        <title>Phycoerythrins of marine unicellular cyanobacteria. I. Bilin types and locations and energy transfer pathways in Synechococcus spp. phycoerythrins.</title>
        <authorList>
            <person name="Ong L.J."/>
            <person name="Glazer A.N."/>
        </authorList>
    </citation>
    <scope>PARTIAL PROTEIN SEQUENCE</scope>
    <scope>CHROMOPHORE BINDING</scope>
</reference>
<proteinExistence type="evidence at protein level"/>
<comment type="function">
    <text>Light-harvesting photosynthetic bile pigment-protein from the phycobiliprotein complex.</text>
</comment>
<comment type="subunit">
    <text>Heterodimer of an alpha and a beta chain.</text>
</comment>
<comment type="subcellular location">
    <subcellularLocation>
        <location>Cellular thylakoid membrane</location>
        <topology>Peripheral membrane protein</topology>
        <orientation>Cytoplasmic side</orientation>
    </subcellularLocation>
    <text>Forms the periphery of the phycobilisome rod.</text>
</comment>
<comment type="PTM">
    <text>Contains two covalently linked phycoerythrobilin chromophores and one covalently linked phycourobilin chromophore.</text>
</comment>
<comment type="similarity">
    <text evidence="1">Belongs to the phycobiliprotein family.</text>
</comment>
<organism>
    <name type="scientific">Synechococcus sp. (strain WH8103)</name>
    <dbReference type="NCBI Taxonomy" id="29410"/>
    <lineage>
        <taxon>Bacteria</taxon>
        <taxon>Bacillati</taxon>
        <taxon>Cyanobacteriota</taxon>
        <taxon>Cyanophyceae</taxon>
        <taxon>Synechococcales</taxon>
        <taxon>Synechococcaceae</taxon>
        <taxon>Synechococcus</taxon>
    </lineage>
</organism>
<accession>P0A319</accession>
<accession>P37721</accession>
<sequence>MLDAFSRAAVSADSSGSFIGGGELASLKSFIADGNKRLDAVNAITSNASCIVSDAVAGICCENTGLTAPNGGVYTNRKMAACLRDGEIVLRYVSYALLAGDASVLQDRCLNGLRETYAALGVPTGSASRAVAIMKAAAGALITNTNSQPKKMPVTTGDCSNIAGEAASYFDMVISAIS</sequence>
<gene>
    <name type="primary">mpeB</name>
</gene>
<feature type="chain" id="PRO_0000199206" description="C-phycoerythrin class 2 subunit beta">
    <location>
        <begin position="1"/>
        <end position="178"/>
    </location>
</feature>
<feature type="binding site" description="covalent">
    <location>
        <position position="50"/>
    </location>
    <ligand>
        <name>phycourobilin</name>
        <dbReference type="ChEBI" id="CHEBI:189062"/>
    </ligand>
</feature>
<feature type="binding site" description="covalent">
    <location>
        <position position="61"/>
    </location>
    <ligand>
        <name>phycourobilin</name>
        <dbReference type="ChEBI" id="CHEBI:189062"/>
    </ligand>
</feature>
<feature type="binding site" description="covalent">
    <location>
        <position position="82"/>
    </location>
    <ligand>
        <name>(2R,3E)-phycoerythrobilin</name>
        <dbReference type="ChEBI" id="CHEBI:85276"/>
        <label>1</label>
    </ligand>
</feature>
<feature type="binding site" description="covalent">
    <location>
        <position position="159"/>
    </location>
    <ligand>
        <name>(2R,3E)-phycoerythrobilin</name>
        <dbReference type="ChEBI" id="CHEBI:85276"/>
        <label>2</label>
    </ligand>
</feature>